<feature type="initiator methionine" description="Removed; by host" evidence="1">
    <location>
        <position position="1"/>
    </location>
</feature>
<feature type="chain" id="PRO_0000099612" description="Entry-fusion complex associated protein OPG095">
    <location>
        <begin position="2"/>
        <end position="250"/>
    </location>
</feature>
<feature type="topological domain" description="Virion surface" evidence="2">
    <location>
        <begin position="2"/>
        <end position="183"/>
    </location>
</feature>
<feature type="transmembrane region" description="Helical" evidence="2">
    <location>
        <begin position="184"/>
        <end position="204"/>
    </location>
</feature>
<feature type="topological domain" description="Intravirion" evidence="2">
    <location>
        <begin position="205"/>
        <end position="250"/>
    </location>
</feature>
<feature type="region of interest" description="Targeting to MV membrane" evidence="1">
    <location>
        <begin position="2"/>
        <end position="12"/>
    </location>
</feature>
<feature type="lipid moiety-binding region" description="N-myristoyl glycine; by host" evidence="3">
    <location>
        <position position="2"/>
    </location>
</feature>
<feature type="disulfide bond" description="by OPG088" evidence="1">
    <location>
        <begin position="34"/>
        <end position="57"/>
    </location>
</feature>
<feature type="disulfide bond" description="by OPG088" evidence="1">
    <location>
        <begin position="49"/>
        <end position="136"/>
    </location>
</feature>
<feature type="disulfide bond" description="by OPG088" evidence="1">
    <location>
        <begin position="116"/>
        <end position="158"/>
    </location>
</feature>
<feature type="mutagenesis site" description="Complete loss of myristoylation." evidence="3">
    <original>G</original>
    <variation>A</variation>
    <location>
        <position position="2"/>
    </location>
</feature>
<name>PG095_VACCC</name>
<reference key="1">
    <citation type="journal article" date="1990" name="Virology">
        <title>The complete DNA sequence of vaccinia virus.</title>
        <authorList>
            <person name="Goebel S.J."/>
            <person name="Johnson G.P."/>
            <person name="Perkus M.E."/>
            <person name="Davis S.W."/>
            <person name="Winslow J.P."/>
            <person name="Paoletti E."/>
        </authorList>
    </citation>
    <scope>NUCLEOTIDE SEQUENCE [LARGE SCALE GENOMIC DNA]</scope>
</reference>
<reference key="2">
    <citation type="journal article" date="1990" name="Virology">
        <title>Appendix to 'The complete DNA sequence of vaccinia virus'.</title>
        <authorList>
            <person name="Goebel S.J."/>
            <person name="Johnson G.P."/>
            <person name="Perkus M.E."/>
            <person name="Davis S.W."/>
            <person name="Winslow J.P."/>
            <person name="Paoletti E."/>
        </authorList>
    </citation>
    <scope>NUCLEOTIDE SEQUENCE [LARGE SCALE GENOMIC DNA]</scope>
</reference>
<reference key="3">
    <citation type="journal article" date="1997" name="J. Virol.">
        <title>Identification and analysis of three myristylated vaccinia virus late proteins.</title>
        <authorList>
            <person name="Martin K.H."/>
            <person name="Grosenbach D.W."/>
            <person name="Franke C.A."/>
            <person name="Hruby D.E."/>
        </authorList>
    </citation>
    <scope>MYRISTOYLATION AT GLY-2</scope>
    <scope>SUBCELLULAR LOCATION</scope>
    <scope>MUTAGENESIS OF GLY-2</scope>
</reference>
<sequence>MGAAASIQTTVNTLSERISSKLEQEANASAQTKCDIEIGNFYIRQNHGCNLTVKNMCSADADAQLDAVLSAATETYSGLTPEQKAYVPAMFTAALNIQTSVNTVVRDFENYVKQTCNSSAVVDNKLKIQNVIIDECYGAPGSPTNLEFINTGSSKGNCAIKALMQLTTKATTQIAPRQVAGTGVQFYMIVIGVIILAALFMYYAKRMLFTSTNDKIKLILANKENVHWTTYMDTFFRTSPMVIATTDMQN</sequence>
<comment type="function">
    <text evidence="1">Component of the entry fusion complex (EFC), which consists of 11 proteins. During cell infection, this complex mediates entry of the virion core into the host cytoplasm by a two-step mechanism consisting of lipid mixing of the viral and cellular membranes and subsequent pore formation.</text>
</comment>
<comment type="subunit">
    <text evidence="1">Component of the entry fusion complex (EFC) composed of OPG053, OPG076, OPG086, OPG094, OPG095, OPG099, OPG107, OPG143, OPG104, OPG147 and OPG155. Except for OPG095 and OPG053, each of the EFC proteins is required for assembly or stability of the complex.</text>
</comment>
<comment type="subcellular location">
    <subcellularLocation>
        <location evidence="1">Virion membrane</location>
        <topology evidence="1">Single-pass membrane protein</topology>
    </subcellularLocation>
    <text evidence="1">Localizes to the membrane surrounding the core of mature virus particles (MV).</text>
</comment>
<comment type="induction">
    <text evidence="1">Expressed in the late phase of the viral replicative cycle.</text>
</comment>
<comment type="PTM">
    <text evidence="1">Myristoylated.</text>
</comment>
<comment type="PTM">
    <text evidence="1">Disulfid bonds are oxidized in the cytoplasm by OPG088 protein.</text>
</comment>
<comment type="PTM">
    <text evidence="1">Unglycosylated because produced in viral factories instead of the classic ER -Golgi route.</text>
</comment>
<comment type="similarity">
    <text evidence="4">Belongs to the orthopoxvirus OPG095 family.</text>
</comment>
<organismHost>
    <name type="scientific">Homo sapiens</name>
    <name type="common">Human</name>
    <dbReference type="NCBI Taxonomy" id="9606"/>
</organismHost>
<evidence type="ECO:0000250" key="1">
    <source>
        <dbReference type="UniProtKB" id="P07612"/>
    </source>
</evidence>
<evidence type="ECO:0000255" key="2"/>
<evidence type="ECO:0000269" key="3">
    <source>
    </source>
</evidence>
<evidence type="ECO:0000305" key="4"/>
<proteinExistence type="evidence at protein level"/>
<gene>
    <name type="primary">OPG099</name>
    <name type="ORF">L1R</name>
</gene>
<keyword id="KW-1015">Disulfide bond</keyword>
<keyword id="KW-0945">Host-virus interaction</keyword>
<keyword id="KW-0426">Late protein</keyword>
<keyword id="KW-0449">Lipoprotein</keyword>
<keyword id="KW-0472">Membrane</keyword>
<keyword id="KW-0519">Myristate</keyword>
<keyword id="KW-1185">Reference proteome</keyword>
<keyword id="KW-0812">Transmembrane</keyword>
<keyword id="KW-1133">Transmembrane helix</keyword>
<keyword id="KW-1161">Viral attachment to host cell</keyword>
<keyword id="KW-0261">Viral envelope protein</keyword>
<keyword id="KW-1162">Viral penetration into host cytoplasm</keyword>
<keyword id="KW-0946">Virion</keyword>
<keyword id="KW-1160">Virus entry into host cell</keyword>
<protein>
    <recommendedName>
        <fullName>Entry-fusion complex associated protein OPG095</fullName>
    </recommendedName>
    <alternativeName>
        <fullName>EFC-associated protein OPG095</fullName>
    </alternativeName>
    <alternativeName>
        <fullName>Protein L1</fullName>
    </alternativeName>
    <alternativeName>
        <fullName>Virion membrane protein M25</fullName>
    </alternativeName>
</protein>
<organism>
    <name type="scientific">Vaccinia virus (strain Copenhagen)</name>
    <name type="common">VACV</name>
    <dbReference type="NCBI Taxonomy" id="10249"/>
    <lineage>
        <taxon>Viruses</taxon>
        <taxon>Varidnaviria</taxon>
        <taxon>Bamfordvirae</taxon>
        <taxon>Nucleocytoviricota</taxon>
        <taxon>Pokkesviricetes</taxon>
        <taxon>Chitovirales</taxon>
        <taxon>Poxviridae</taxon>
        <taxon>Chordopoxvirinae</taxon>
        <taxon>Orthopoxvirus</taxon>
        <taxon>Vaccinia virus</taxon>
    </lineage>
</organism>
<dbReference type="EMBL" id="M35027">
    <property type="protein sequence ID" value="AAA48076.1"/>
    <property type="molecule type" value="Genomic_DNA"/>
</dbReference>
<dbReference type="PIR" id="H42512">
    <property type="entry name" value="H42512"/>
</dbReference>
<dbReference type="SMR" id="P20540"/>
<dbReference type="ELM" id="P20540"/>
<dbReference type="iPTMnet" id="P20540"/>
<dbReference type="Proteomes" id="UP000008269">
    <property type="component" value="Segment"/>
</dbReference>
<dbReference type="GO" id="GO:0016020">
    <property type="term" value="C:membrane"/>
    <property type="evidence" value="ECO:0007669"/>
    <property type="project" value="UniProtKB-KW"/>
</dbReference>
<dbReference type="GO" id="GO:0019031">
    <property type="term" value="C:viral envelope"/>
    <property type="evidence" value="ECO:0007669"/>
    <property type="project" value="UniProtKB-KW"/>
</dbReference>
<dbReference type="GO" id="GO:0055036">
    <property type="term" value="C:virion membrane"/>
    <property type="evidence" value="ECO:0007669"/>
    <property type="project" value="UniProtKB-SubCell"/>
</dbReference>
<dbReference type="GO" id="GO:0046718">
    <property type="term" value="P:symbiont entry into host cell"/>
    <property type="evidence" value="ECO:0007669"/>
    <property type="project" value="UniProtKB-KW"/>
</dbReference>
<dbReference type="GO" id="GO:0019062">
    <property type="term" value="P:virion attachment to host cell"/>
    <property type="evidence" value="ECO:0007669"/>
    <property type="project" value="UniProtKB-KW"/>
</dbReference>
<dbReference type="InterPro" id="IPR003472">
    <property type="entry name" value="Virion_mem_poxvirus_L1"/>
</dbReference>
<dbReference type="Pfam" id="PF02442">
    <property type="entry name" value="L1R_F9L"/>
    <property type="match status" value="1"/>
</dbReference>
<accession>P20540</accession>